<dbReference type="EC" id="2.5.1.145" evidence="1"/>
<dbReference type="EMBL" id="CP001173">
    <property type="protein sequence ID" value="ACI27657.1"/>
    <property type="molecule type" value="Genomic_DNA"/>
</dbReference>
<dbReference type="RefSeq" id="WP_000995045.1">
    <property type="nucleotide sequence ID" value="NC_011333.1"/>
</dbReference>
<dbReference type="SMR" id="B5Z7V8"/>
<dbReference type="KEGG" id="hpg:HPG27_903"/>
<dbReference type="HOGENOM" id="CLU_013386_1_0_7"/>
<dbReference type="UniPathway" id="UPA00664"/>
<dbReference type="Proteomes" id="UP000001735">
    <property type="component" value="Chromosome"/>
</dbReference>
<dbReference type="GO" id="GO:0005886">
    <property type="term" value="C:plasma membrane"/>
    <property type="evidence" value="ECO:0007669"/>
    <property type="project" value="UniProtKB-SubCell"/>
</dbReference>
<dbReference type="GO" id="GO:0008961">
    <property type="term" value="F:phosphatidylglycerol-prolipoprotein diacylglyceryl transferase activity"/>
    <property type="evidence" value="ECO:0007669"/>
    <property type="project" value="UniProtKB-UniRule"/>
</dbReference>
<dbReference type="GO" id="GO:0042158">
    <property type="term" value="P:lipoprotein biosynthetic process"/>
    <property type="evidence" value="ECO:0007669"/>
    <property type="project" value="UniProtKB-UniRule"/>
</dbReference>
<dbReference type="HAMAP" id="MF_01147">
    <property type="entry name" value="Lgt"/>
    <property type="match status" value="1"/>
</dbReference>
<dbReference type="InterPro" id="IPR001640">
    <property type="entry name" value="Lgt"/>
</dbReference>
<dbReference type="NCBIfam" id="TIGR00544">
    <property type="entry name" value="lgt"/>
    <property type="match status" value="1"/>
</dbReference>
<dbReference type="PANTHER" id="PTHR30589:SF0">
    <property type="entry name" value="PHOSPHATIDYLGLYCEROL--PROLIPOPROTEIN DIACYLGLYCERYL TRANSFERASE"/>
    <property type="match status" value="1"/>
</dbReference>
<dbReference type="PANTHER" id="PTHR30589">
    <property type="entry name" value="PROLIPOPROTEIN DIACYLGLYCERYL TRANSFERASE"/>
    <property type="match status" value="1"/>
</dbReference>
<dbReference type="Pfam" id="PF01790">
    <property type="entry name" value="LGT"/>
    <property type="match status" value="1"/>
</dbReference>
<dbReference type="PROSITE" id="PS01311">
    <property type="entry name" value="LGT"/>
    <property type="match status" value="1"/>
</dbReference>
<protein>
    <recommendedName>
        <fullName evidence="1">Phosphatidylglycerol--prolipoprotein diacylglyceryl transferase</fullName>
        <ecNumber evidence="1">2.5.1.145</ecNumber>
    </recommendedName>
</protein>
<gene>
    <name evidence="1" type="primary">lgt</name>
    <name type="ordered locus">HPG27_903</name>
</gene>
<name>LGT_HELPG</name>
<organism>
    <name type="scientific">Helicobacter pylori (strain G27)</name>
    <dbReference type="NCBI Taxonomy" id="563041"/>
    <lineage>
        <taxon>Bacteria</taxon>
        <taxon>Pseudomonadati</taxon>
        <taxon>Campylobacterota</taxon>
        <taxon>Epsilonproteobacteria</taxon>
        <taxon>Campylobacterales</taxon>
        <taxon>Helicobacteraceae</taxon>
        <taxon>Helicobacter</taxon>
    </lineage>
</organism>
<accession>B5Z7V8</accession>
<comment type="function">
    <text evidence="1">Catalyzes the transfer of the diacylglyceryl group from phosphatidylglycerol to the sulfhydryl group of the N-terminal cysteine of a prolipoprotein, the first step in the formation of mature lipoproteins.</text>
</comment>
<comment type="catalytic activity">
    <reaction evidence="1">
        <text>L-cysteinyl-[prolipoprotein] + a 1,2-diacyl-sn-glycero-3-phospho-(1'-sn-glycerol) = an S-1,2-diacyl-sn-glyceryl-L-cysteinyl-[prolipoprotein] + sn-glycerol 1-phosphate + H(+)</text>
        <dbReference type="Rhea" id="RHEA:56712"/>
        <dbReference type="Rhea" id="RHEA-COMP:14679"/>
        <dbReference type="Rhea" id="RHEA-COMP:14680"/>
        <dbReference type="ChEBI" id="CHEBI:15378"/>
        <dbReference type="ChEBI" id="CHEBI:29950"/>
        <dbReference type="ChEBI" id="CHEBI:57685"/>
        <dbReference type="ChEBI" id="CHEBI:64716"/>
        <dbReference type="ChEBI" id="CHEBI:140658"/>
        <dbReference type="EC" id="2.5.1.145"/>
    </reaction>
</comment>
<comment type="pathway">
    <text evidence="1">Protein modification; lipoprotein biosynthesis (diacylglyceryl transfer).</text>
</comment>
<comment type="subcellular location">
    <subcellularLocation>
        <location evidence="1">Cell inner membrane</location>
        <topology evidence="1">Multi-pass membrane protein</topology>
    </subcellularLocation>
</comment>
<comment type="similarity">
    <text evidence="1">Belongs to the Lgt family.</text>
</comment>
<feature type="chain" id="PRO_1000137433" description="Phosphatidylglycerol--prolipoprotein diacylglyceryl transferase">
    <location>
        <begin position="1"/>
        <end position="284"/>
    </location>
</feature>
<feature type="transmembrane region" description="Helical" evidence="1">
    <location>
        <begin position="18"/>
        <end position="38"/>
    </location>
</feature>
<feature type="transmembrane region" description="Helical" evidence="1">
    <location>
        <begin position="62"/>
        <end position="82"/>
    </location>
</feature>
<feature type="transmembrane region" description="Helical" evidence="1">
    <location>
        <begin position="106"/>
        <end position="126"/>
    </location>
</feature>
<feature type="transmembrane region" description="Helical" evidence="1">
    <location>
        <begin position="136"/>
        <end position="156"/>
    </location>
</feature>
<feature type="transmembrane region" description="Helical" evidence="1">
    <location>
        <begin position="190"/>
        <end position="210"/>
    </location>
</feature>
<feature type="transmembrane region" description="Helical" evidence="1">
    <location>
        <begin position="218"/>
        <end position="238"/>
    </location>
</feature>
<feature type="transmembrane region" description="Helical" evidence="1">
    <location>
        <begin position="252"/>
        <end position="272"/>
    </location>
</feature>
<feature type="binding site" evidence="1">
    <location>
        <position position="155"/>
    </location>
    <ligand>
        <name>a 1,2-diacyl-sn-glycero-3-phospho-(1'-sn-glycerol)</name>
        <dbReference type="ChEBI" id="CHEBI:64716"/>
    </ligand>
</feature>
<proteinExistence type="inferred from homology"/>
<reference key="1">
    <citation type="journal article" date="2009" name="J. Bacteriol.">
        <title>The complete genome sequence of Helicobacter pylori strain G27.</title>
        <authorList>
            <person name="Baltrus D.A."/>
            <person name="Amieva M.R."/>
            <person name="Covacci A."/>
            <person name="Lowe T.M."/>
            <person name="Merrell D.S."/>
            <person name="Ottemann K.M."/>
            <person name="Stein M."/>
            <person name="Salama N.R."/>
            <person name="Guillemin K."/>
        </authorList>
    </citation>
    <scope>NUCLEOTIDE SEQUENCE [LARGE SCALE GENOMIC DNA]</scope>
    <source>
        <strain>G27</strain>
    </source>
</reference>
<sequence length="284" mass="32715">MNAWNTIYDQFNPIAFSLGGIEVHWYGLAYACAIVIAFYMALRMIQKDPERFPIERKEFESYFLWAELGIVLGARIGYVLIYEPNSSYYLTHFWQIFNPFDRHGNFVGIRGMSYHGGLVGFLIASYLYSRKDLKKLLIYLDLIAISLPLGYVFGRIGNFLNQELVGRVVPKDSHLGQIIGIMVDNQLRYPSQLIEAFLEGVIVFLMVLWAKKHTKTHGLLIVVYGLGYSLMRFIAEFYREPDSQMGVYFLNLSMGQILSLFMVVVSLGILLYATRHSKKIKENQ</sequence>
<keyword id="KW-0997">Cell inner membrane</keyword>
<keyword id="KW-1003">Cell membrane</keyword>
<keyword id="KW-0472">Membrane</keyword>
<keyword id="KW-1185">Reference proteome</keyword>
<keyword id="KW-0808">Transferase</keyword>
<keyword id="KW-0812">Transmembrane</keyword>
<keyword id="KW-1133">Transmembrane helix</keyword>
<evidence type="ECO:0000255" key="1">
    <source>
        <dbReference type="HAMAP-Rule" id="MF_01147"/>
    </source>
</evidence>